<feature type="initiator methionine" description="Removed" evidence="12">
    <location>
        <position position="1"/>
    </location>
</feature>
<feature type="chain" id="PRO_0000330817" description="Protein FAM83G">
    <location>
        <begin position="2"/>
        <end position="823"/>
    </location>
</feature>
<feature type="region of interest" description="DUF1669" evidence="8">
    <location>
        <begin position="2"/>
        <end position="312"/>
    </location>
</feature>
<feature type="region of interest" description="Disordered" evidence="1">
    <location>
        <begin position="75"/>
        <end position="108"/>
    </location>
</feature>
<feature type="region of interest" description="Disordered" evidence="1">
    <location>
        <begin position="450"/>
        <end position="823"/>
    </location>
</feature>
<feature type="compositionally biased region" description="Polar residues" evidence="1">
    <location>
        <begin position="452"/>
        <end position="465"/>
    </location>
</feature>
<feature type="compositionally biased region" description="Pro residues" evidence="1">
    <location>
        <begin position="497"/>
        <end position="508"/>
    </location>
</feature>
<feature type="compositionally biased region" description="Basic and acidic residues" evidence="1">
    <location>
        <begin position="529"/>
        <end position="543"/>
    </location>
</feature>
<feature type="compositionally biased region" description="Acidic residues" evidence="1">
    <location>
        <begin position="578"/>
        <end position="587"/>
    </location>
</feature>
<feature type="compositionally biased region" description="Basic and acidic residues" evidence="1">
    <location>
        <begin position="672"/>
        <end position="681"/>
    </location>
</feature>
<feature type="compositionally biased region" description="Basic and acidic residues" evidence="1">
    <location>
        <begin position="809"/>
        <end position="823"/>
    </location>
</feature>
<feature type="modified residue" description="N-acetylalanine" evidence="12">
    <location>
        <position position="2"/>
    </location>
</feature>
<feature type="modified residue" description="Phosphoserine" evidence="12">
    <location>
        <position position="4"/>
    </location>
</feature>
<feature type="modified residue" description="Phosphoserine" evidence="12">
    <location>
        <position position="124"/>
    </location>
</feature>
<feature type="modified residue" description="Phosphoserine" evidence="12">
    <location>
        <position position="127"/>
    </location>
</feature>
<feature type="modified residue" description="Phosphoserine" evidence="12">
    <location>
        <position position="356"/>
    </location>
</feature>
<feature type="modified residue" description="Phosphoserine" evidence="2">
    <location>
        <position position="610"/>
    </location>
</feature>
<feature type="modified residue" description="Phosphoserine" evidence="2">
    <location>
        <position position="614"/>
    </location>
</feature>
<feature type="modified residue" description="Phosphoserine" evidence="2">
    <location>
        <position position="616"/>
    </location>
</feature>
<feature type="modified residue" description="Phosphoserine" evidence="13 14">
    <location>
        <position position="650"/>
    </location>
</feature>
<feature type="modified residue" description="Phosphoserine" evidence="9 10 11">
    <location>
        <position position="666"/>
    </location>
</feature>
<feature type="splice variant" id="VSP_033120" description="In isoform 2." evidence="5">
    <location>
        <begin position="1"/>
        <end position="248"/>
    </location>
</feature>
<feature type="splice variant" id="VSP_033121" description="In isoform 2." evidence="5">
    <original>KFKGALAQKFMFVDGDRAVCGSY</original>
    <variation>MGARGLGGGSRVMCLTSAPSLCC</variation>
    <location>
        <begin position="249"/>
        <end position="271"/>
    </location>
</feature>
<feature type="splice variant" id="VSP_033122" description="In isoform 2." evidence="5">
    <original>GQQFHHHRVPASGTRDKDGFPGPPRYRSAAD</original>
    <variation>VGQGPCTPGVTSPSLPATQELELLSSGLPCP</variation>
    <location>
        <begin position="695"/>
        <end position="725"/>
    </location>
</feature>
<feature type="splice variant" id="VSP_033123" description="In isoform 2." evidence="5">
    <location>
        <begin position="726"/>
        <end position="823"/>
    </location>
</feature>
<feature type="sequence variant" id="VAR_075713" description="Found in patient with Joubert syndrome; uncertain significance; dbSNP:rs371100508." evidence="3">
    <original>L</original>
    <variation>F</variation>
    <location>
        <position position="64"/>
    </location>
</feature>
<feature type="sequence variant" id="VAR_053903" description="In dbSNP:rs2074283.">
    <original>I</original>
    <variation>T</variation>
    <location>
        <position position="109"/>
    </location>
</feature>
<feature type="sequence variant" id="VAR_075714" description="Found in patient with Joubert syndrome; uncertain significance; dbSNP:rs201046878." evidence="3">
    <original>R</original>
    <variation>W</variation>
    <location>
        <position position="630"/>
    </location>
</feature>
<feature type="mutagenesis site" description="Loss of interaction with CSNK1A1. Loss of interaction with CSNK1A1; when associated with A-300." evidence="4">
    <original>F</original>
    <variation>A</variation>
    <location>
        <position position="296"/>
    </location>
</feature>
<feature type="mutagenesis site" description="No effect on interaction with CSNK1A1. Loss of interaction with CSNK1A1; when associated with A-296." evidence="4">
    <original>F</original>
    <variation>A</variation>
    <location>
        <position position="300"/>
    </location>
</feature>
<feature type="mutagenesis site" description="Completely abolishes phosphorylation by ALK3 in vitro. NEDD9 and ASNS activation in response to BMPs is abolished." evidence="2">
    <original>S</original>
    <variation>A</variation>
    <location>
        <position position="610"/>
    </location>
</feature>
<gene>
    <name type="primary">FAM83G</name>
    <name evidence="6" type="synonym">PAWS1</name>
</gene>
<keyword id="KW-0007">Acetylation</keyword>
<keyword id="KW-0025">Alternative splicing</keyword>
<keyword id="KW-0963">Cytoplasm</keyword>
<keyword id="KW-0539">Nucleus</keyword>
<keyword id="KW-0597">Phosphoprotein</keyword>
<keyword id="KW-1267">Proteomics identification</keyword>
<keyword id="KW-1185">Reference proteome</keyword>
<comment type="function">
    <text evidence="2">Substrate for type I BMP receptor kinase involved in regulation of some target genes of the BMP signaling pathway. Also regulates the expression of several non-BMP target genes, suggesting a role in other signaling pathways.</text>
</comment>
<comment type="subunit">
    <text evidence="2 4">Interacts with SMAD1 (via MH2 domain); in a SMAD4-independent manner (PubMed:24554596, PubMed:29789297). Directly interacts (via DUF1669) with casein kinase isoforms CSNK1A1 and CSNK1A1L (PubMed:29789297).</text>
</comment>
<comment type="interaction">
    <interactant intactId="EBI-1047240">
        <id>A6ND36</id>
    </interactant>
    <interactant intactId="EBI-1383726">
        <id>P48729</id>
        <label>CSNK1A1</label>
    </interactant>
    <organismsDiffer>false</organismsDiffer>
    <experiments>16</experiments>
</comment>
<comment type="subcellular location">
    <subcellularLocation>
        <location evidence="2 4">Cytoplasm</location>
        <location evidence="2 4">Cytosol</location>
    </subcellularLocation>
    <subcellularLocation>
        <location evidence="2">Nucleus</location>
    </subcellularLocation>
    <text evidence="2">Detected predominantly in the cytosol. Upon BMP stimulation, a small portion localizes the nucleus.</text>
</comment>
<comment type="alternative products">
    <event type="alternative splicing"/>
    <isoform>
        <id>A6ND36-1</id>
        <name>1</name>
        <sequence type="displayed"/>
    </isoform>
    <isoform>
        <id>A6ND36-2</id>
        <name>2</name>
        <sequence type="described" ref="VSP_033120 VSP_033121 VSP_033122 VSP_033123"/>
    </isoform>
</comment>
<comment type="domain">
    <text evidence="8">All members of the FAM83 family of proteins share a conserved N-terminal DUF1669 (domain of unknown function 1669) domain of about 300 amino acids. This domain mediates the interaction with casein kinase 1 (CK1) isoforms. Therefore, it has been proposed to rename DUF1669 the polypeptide anchor of CK1 domain.</text>
</comment>
<comment type="PTM">
    <text evidence="4">Phosphorylated in vitro by CSNK1A1.</text>
</comment>
<comment type="PTM">
    <text evidence="2">BMP signaling induces the phosphorylation by BMPR1A at Ser-610, Ser-614 and Ser-616. Phosphorylation at Ser-610 is necessary for the activation of SMAD4-independent BMP target genes such as NEDD9 and ASNS.</text>
</comment>
<comment type="similarity">
    <text evidence="7">Belongs to the FAM83 family.</text>
</comment>
<protein>
    <recommendedName>
        <fullName>Protein FAM83G</fullName>
    </recommendedName>
    <alternativeName>
        <fullName evidence="6">Protein associated with SMAD1</fullName>
    </alternativeName>
</protein>
<reference key="1">
    <citation type="journal article" date="2004" name="Nat. Genet.">
        <title>Complete sequencing and characterization of 21,243 full-length human cDNAs.</title>
        <authorList>
            <person name="Ota T."/>
            <person name="Suzuki Y."/>
            <person name="Nishikawa T."/>
            <person name="Otsuki T."/>
            <person name="Sugiyama T."/>
            <person name="Irie R."/>
            <person name="Wakamatsu A."/>
            <person name="Hayashi K."/>
            <person name="Sato H."/>
            <person name="Nagai K."/>
            <person name="Kimura K."/>
            <person name="Makita H."/>
            <person name="Sekine M."/>
            <person name="Obayashi M."/>
            <person name="Nishi T."/>
            <person name="Shibahara T."/>
            <person name="Tanaka T."/>
            <person name="Ishii S."/>
            <person name="Yamamoto J."/>
            <person name="Saito K."/>
            <person name="Kawai Y."/>
            <person name="Isono Y."/>
            <person name="Nakamura Y."/>
            <person name="Nagahari K."/>
            <person name="Murakami K."/>
            <person name="Yasuda T."/>
            <person name="Iwayanagi T."/>
            <person name="Wagatsuma M."/>
            <person name="Shiratori A."/>
            <person name="Sudo H."/>
            <person name="Hosoiri T."/>
            <person name="Kaku Y."/>
            <person name="Kodaira H."/>
            <person name="Kondo H."/>
            <person name="Sugawara M."/>
            <person name="Takahashi M."/>
            <person name="Kanda K."/>
            <person name="Yokoi T."/>
            <person name="Furuya T."/>
            <person name="Kikkawa E."/>
            <person name="Omura Y."/>
            <person name="Abe K."/>
            <person name="Kamihara K."/>
            <person name="Katsuta N."/>
            <person name="Sato K."/>
            <person name="Tanikawa M."/>
            <person name="Yamazaki M."/>
            <person name="Ninomiya K."/>
            <person name="Ishibashi T."/>
            <person name="Yamashita H."/>
            <person name="Murakawa K."/>
            <person name="Fujimori K."/>
            <person name="Tanai H."/>
            <person name="Kimata M."/>
            <person name="Watanabe M."/>
            <person name="Hiraoka S."/>
            <person name="Chiba Y."/>
            <person name="Ishida S."/>
            <person name="Ono Y."/>
            <person name="Takiguchi S."/>
            <person name="Watanabe S."/>
            <person name="Yosida M."/>
            <person name="Hotuta T."/>
            <person name="Kusano J."/>
            <person name="Kanehori K."/>
            <person name="Takahashi-Fujii A."/>
            <person name="Hara H."/>
            <person name="Tanase T.-O."/>
            <person name="Nomura Y."/>
            <person name="Togiya S."/>
            <person name="Komai F."/>
            <person name="Hara R."/>
            <person name="Takeuchi K."/>
            <person name="Arita M."/>
            <person name="Imose N."/>
            <person name="Musashino K."/>
            <person name="Yuuki H."/>
            <person name="Oshima A."/>
            <person name="Sasaki N."/>
            <person name="Aotsuka S."/>
            <person name="Yoshikawa Y."/>
            <person name="Matsunawa H."/>
            <person name="Ichihara T."/>
            <person name="Shiohata N."/>
            <person name="Sano S."/>
            <person name="Moriya S."/>
            <person name="Momiyama H."/>
            <person name="Satoh N."/>
            <person name="Takami S."/>
            <person name="Terashima Y."/>
            <person name="Suzuki O."/>
            <person name="Nakagawa S."/>
            <person name="Senoh A."/>
            <person name="Mizoguchi H."/>
            <person name="Goto Y."/>
            <person name="Shimizu F."/>
            <person name="Wakebe H."/>
            <person name="Hishigaki H."/>
            <person name="Watanabe T."/>
            <person name="Sugiyama A."/>
            <person name="Takemoto M."/>
            <person name="Kawakami B."/>
            <person name="Yamazaki M."/>
            <person name="Watanabe K."/>
            <person name="Kumagai A."/>
            <person name="Itakura S."/>
            <person name="Fukuzumi Y."/>
            <person name="Fujimori Y."/>
            <person name="Komiyama M."/>
            <person name="Tashiro H."/>
            <person name="Tanigami A."/>
            <person name="Fujiwara T."/>
            <person name="Ono T."/>
            <person name="Yamada K."/>
            <person name="Fujii Y."/>
            <person name="Ozaki K."/>
            <person name="Hirao M."/>
            <person name="Ohmori Y."/>
            <person name="Kawabata A."/>
            <person name="Hikiji T."/>
            <person name="Kobatake N."/>
            <person name="Inagaki H."/>
            <person name="Ikema Y."/>
            <person name="Okamoto S."/>
            <person name="Okitani R."/>
            <person name="Kawakami T."/>
            <person name="Noguchi S."/>
            <person name="Itoh T."/>
            <person name="Shigeta K."/>
            <person name="Senba T."/>
            <person name="Matsumura K."/>
            <person name="Nakajima Y."/>
            <person name="Mizuno T."/>
            <person name="Morinaga M."/>
            <person name="Sasaki M."/>
            <person name="Togashi T."/>
            <person name="Oyama M."/>
            <person name="Hata H."/>
            <person name="Watanabe M."/>
            <person name="Komatsu T."/>
            <person name="Mizushima-Sugano J."/>
            <person name="Satoh T."/>
            <person name="Shirai Y."/>
            <person name="Takahashi Y."/>
            <person name="Nakagawa K."/>
            <person name="Okumura K."/>
            <person name="Nagase T."/>
            <person name="Nomura N."/>
            <person name="Kikuchi H."/>
            <person name="Masuho Y."/>
            <person name="Yamashita R."/>
            <person name="Nakai K."/>
            <person name="Yada T."/>
            <person name="Nakamura Y."/>
            <person name="Ohara O."/>
            <person name="Isogai T."/>
            <person name="Sugano S."/>
        </authorList>
    </citation>
    <scope>NUCLEOTIDE SEQUENCE [LARGE SCALE MRNA] (ISOFORM 2)</scope>
    <source>
        <tissue>Tongue</tissue>
    </source>
</reference>
<reference key="2">
    <citation type="journal article" date="2006" name="Nature">
        <title>DNA sequence of human chromosome 17 and analysis of rearrangement in the human lineage.</title>
        <authorList>
            <person name="Zody M.C."/>
            <person name="Garber M."/>
            <person name="Adams D.J."/>
            <person name="Sharpe T."/>
            <person name="Harrow J."/>
            <person name="Lupski J.R."/>
            <person name="Nicholson C."/>
            <person name="Searle S.M."/>
            <person name="Wilming L."/>
            <person name="Young S.K."/>
            <person name="Abouelleil A."/>
            <person name="Allen N.R."/>
            <person name="Bi W."/>
            <person name="Bloom T."/>
            <person name="Borowsky M.L."/>
            <person name="Bugalter B.E."/>
            <person name="Butler J."/>
            <person name="Chang J.L."/>
            <person name="Chen C.-K."/>
            <person name="Cook A."/>
            <person name="Corum B."/>
            <person name="Cuomo C.A."/>
            <person name="de Jong P.J."/>
            <person name="DeCaprio D."/>
            <person name="Dewar K."/>
            <person name="FitzGerald M."/>
            <person name="Gilbert J."/>
            <person name="Gibson R."/>
            <person name="Gnerre S."/>
            <person name="Goldstein S."/>
            <person name="Grafham D.V."/>
            <person name="Grocock R."/>
            <person name="Hafez N."/>
            <person name="Hagopian D.S."/>
            <person name="Hart E."/>
            <person name="Norman C.H."/>
            <person name="Humphray S."/>
            <person name="Jaffe D.B."/>
            <person name="Jones M."/>
            <person name="Kamal M."/>
            <person name="Khodiyar V.K."/>
            <person name="LaButti K."/>
            <person name="Laird G."/>
            <person name="Lehoczky J."/>
            <person name="Liu X."/>
            <person name="Lokyitsang T."/>
            <person name="Loveland J."/>
            <person name="Lui A."/>
            <person name="Macdonald P."/>
            <person name="Major J.E."/>
            <person name="Matthews L."/>
            <person name="Mauceli E."/>
            <person name="McCarroll S.A."/>
            <person name="Mihalev A.H."/>
            <person name="Mudge J."/>
            <person name="Nguyen C."/>
            <person name="Nicol R."/>
            <person name="O'Leary S.B."/>
            <person name="Osoegawa K."/>
            <person name="Schwartz D.C."/>
            <person name="Shaw-Smith C."/>
            <person name="Stankiewicz P."/>
            <person name="Steward C."/>
            <person name="Swarbreck D."/>
            <person name="Venkataraman V."/>
            <person name="Whittaker C.A."/>
            <person name="Yang X."/>
            <person name="Zimmer A.R."/>
            <person name="Bradley A."/>
            <person name="Hubbard T."/>
            <person name="Birren B.W."/>
            <person name="Rogers J."/>
            <person name="Lander E.S."/>
            <person name="Nusbaum C."/>
        </authorList>
    </citation>
    <scope>NUCLEOTIDE SEQUENCE [LARGE SCALE GENOMIC DNA]</scope>
</reference>
<reference key="3">
    <citation type="journal article" date="2004" name="Genome Res.">
        <title>The status, quality, and expansion of the NIH full-length cDNA project: the Mammalian Gene Collection (MGC).</title>
        <authorList>
            <consortium name="The MGC Project Team"/>
        </authorList>
    </citation>
    <scope>NUCLEOTIDE SEQUENCE [LARGE SCALE MRNA] OF 618-823 (ISOFORM 1)</scope>
    <source>
        <tissue>Bone</tissue>
    </source>
</reference>
<reference key="4">
    <citation type="journal article" date="2006" name="Nat. Biotechnol.">
        <title>A probability-based approach for high-throughput protein phosphorylation analysis and site localization.</title>
        <authorList>
            <person name="Beausoleil S.A."/>
            <person name="Villen J."/>
            <person name="Gerber S.A."/>
            <person name="Rush J."/>
            <person name="Gygi S.P."/>
        </authorList>
    </citation>
    <scope>PHOSPHORYLATION [LARGE SCALE ANALYSIS] AT SER-666</scope>
    <scope>IDENTIFICATION BY MASS SPECTROMETRY [LARGE SCALE ANALYSIS]</scope>
    <source>
        <tissue>Cervix carcinoma</tissue>
    </source>
</reference>
<reference key="5">
    <citation type="journal article" date="2008" name="J. Proteome Res.">
        <title>Combining protein-based IMAC, peptide-based IMAC, and MudPIT for efficient phosphoproteomic analysis.</title>
        <authorList>
            <person name="Cantin G.T."/>
            <person name="Yi W."/>
            <person name="Lu B."/>
            <person name="Park S.K."/>
            <person name="Xu T."/>
            <person name="Lee J.-D."/>
            <person name="Yates J.R. III"/>
        </authorList>
    </citation>
    <scope>PHOSPHORYLATION [LARGE SCALE ANALYSIS] AT SER-666</scope>
    <scope>IDENTIFICATION BY MASS SPECTROMETRY [LARGE SCALE ANALYSIS]</scope>
    <source>
        <tissue>Cervix carcinoma</tissue>
    </source>
</reference>
<reference key="6">
    <citation type="journal article" date="2008" name="Proc. Natl. Acad. Sci. U.S.A.">
        <title>A quantitative atlas of mitotic phosphorylation.</title>
        <authorList>
            <person name="Dephoure N."/>
            <person name="Zhou C."/>
            <person name="Villen J."/>
            <person name="Beausoleil S.A."/>
            <person name="Bakalarski C.E."/>
            <person name="Elledge S.J."/>
            <person name="Gygi S.P."/>
        </authorList>
    </citation>
    <scope>PHOSPHORYLATION [LARGE SCALE ANALYSIS] AT SER-666</scope>
    <scope>IDENTIFICATION BY MASS SPECTROMETRY [LARGE SCALE ANALYSIS]</scope>
    <source>
        <tissue>Cervix carcinoma</tissue>
    </source>
</reference>
<reference key="7">
    <citation type="journal article" date="2011" name="Sci. Signal.">
        <title>System-wide temporal characterization of the proteome and phosphoproteome of human embryonic stem cell differentiation.</title>
        <authorList>
            <person name="Rigbolt K.T."/>
            <person name="Prokhorova T.A."/>
            <person name="Akimov V."/>
            <person name="Henningsen J."/>
            <person name="Johansen P.T."/>
            <person name="Kratchmarova I."/>
            <person name="Kassem M."/>
            <person name="Mann M."/>
            <person name="Olsen J.V."/>
            <person name="Blagoev B."/>
        </authorList>
    </citation>
    <scope>ACETYLATION [LARGE SCALE ANALYSIS] AT ALA-2</scope>
    <scope>PHOSPHORYLATION [LARGE SCALE ANALYSIS] AT SER-4; SER-124; SER-127 AND SER-356</scope>
    <scope>CLEAVAGE OF INITIATOR METHIONINE [LARGE SCALE ANALYSIS]</scope>
    <scope>IDENTIFICATION BY MASS SPECTROMETRY [LARGE SCALE ANALYSIS]</scope>
</reference>
<reference key="8">
    <citation type="journal article" date="2013" name="J. Proteome Res.">
        <title>Toward a comprehensive characterization of a human cancer cell phosphoproteome.</title>
        <authorList>
            <person name="Zhou H."/>
            <person name="Di Palma S."/>
            <person name="Preisinger C."/>
            <person name="Peng M."/>
            <person name="Polat A.N."/>
            <person name="Heck A.J."/>
            <person name="Mohammed S."/>
        </authorList>
    </citation>
    <scope>PHOSPHORYLATION [LARGE SCALE ANALYSIS] AT SER-650</scope>
    <scope>IDENTIFICATION BY MASS SPECTROMETRY [LARGE SCALE ANALYSIS]</scope>
    <source>
        <tissue>Cervix carcinoma</tissue>
        <tissue>Erythroleukemia</tissue>
    </source>
</reference>
<reference key="9">
    <citation type="journal article" date="2014" name="J. Proteomics">
        <title>An enzyme assisted RP-RPLC approach for in-depth analysis of human liver phosphoproteome.</title>
        <authorList>
            <person name="Bian Y."/>
            <person name="Song C."/>
            <person name="Cheng K."/>
            <person name="Dong M."/>
            <person name="Wang F."/>
            <person name="Huang J."/>
            <person name="Sun D."/>
            <person name="Wang L."/>
            <person name="Ye M."/>
            <person name="Zou H."/>
        </authorList>
    </citation>
    <scope>PHOSPHORYLATION [LARGE SCALE ANALYSIS] AT SER-650</scope>
    <scope>IDENTIFICATION BY MASS SPECTROMETRY [LARGE SCALE ANALYSIS]</scope>
    <source>
        <tissue>Liver</tissue>
    </source>
</reference>
<reference key="10">
    <citation type="journal article" date="2014" name="Open Biol.">
        <title>Protein associated with SMAD1 (PAWS1/FAM83G) is a substrate for type I bone morphogenetic protein receptors and modulates bone morphogenetic protein signalling.</title>
        <authorList>
            <person name="Vogt J."/>
            <person name="Dingwell K.S."/>
            <person name="Herhaus L."/>
            <person name="Gourlay R."/>
            <person name="Macartney T."/>
            <person name="Campbell D."/>
            <person name="Smith J.C."/>
            <person name="Sapkota G.P."/>
        </authorList>
    </citation>
    <scope>FUNCTION</scope>
    <scope>INTERACTION WITH SMAD1</scope>
    <scope>SUBCELLULAR LOCATION</scope>
    <scope>PHOSPHORYLATION AT SER-610; SER-614 AND SER-616 BY BMPR1A</scope>
    <scope>MUTAGENESIS OF SER-610</scope>
</reference>
<reference key="11">
    <citation type="journal article" date="2018" name="Sci. Signal.">
        <title>The DUF1669 domain of FAM83 family proteins anchor casein kinase 1 isoforms.</title>
        <authorList>
            <person name="Fulcher L.J."/>
            <person name="Bozatzi P."/>
            <person name="Tachie-Menson T."/>
            <person name="Wu K.Z.L."/>
            <person name="Cummins T.D."/>
            <person name="Bufton J.C."/>
            <person name="Pinkas D.M."/>
            <person name="Dunbar K."/>
            <person name="Shrestha S."/>
            <person name="Wood N.T."/>
            <person name="Weidlich S."/>
            <person name="Macartney T.J."/>
            <person name="Varghese J."/>
            <person name="Gourlay R."/>
            <person name="Campbell D.G."/>
            <person name="Dingwell K.S."/>
            <person name="Smith J.C."/>
            <person name="Bullock A.N."/>
            <person name="Sapkota G.P."/>
        </authorList>
    </citation>
    <scope>INTERACTION WITH CSNK1A1; CSNK1A1L AND SMAD1</scope>
    <scope>SUBCELLULAR LOCATION</scope>
    <scope>PHOSPHORYLATION</scope>
    <scope>MUTAGENESIS OF PHE-296 AND PHE-300</scope>
</reference>
<reference key="12">
    <citation type="journal article" date="2015" name="Am. J. Hum. Genet.">
        <title>Joubert Syndrome in French Canadians and Identification of Mutations in CEP104.</title>
        <authorList>
            <consortium name="Care4Rare Canada Consortium"/>
            <person name="Srour M."/>
            <person name="Hamdan F.F."/>
            <person name="McKnight D."/>
            <person name="Davis E."/>
            <person name="Mandel H."/>
            <person name="Schwartzentruber J."/>
            <person name="Martin B."/>
            <person name="Patry L."/>
            <person name="Nassif C."/>
            <person name="Dionne-Laporte A."/>
            <person name="Ospina L.H."/>
            <person name="Lemyre E."/>
            <person name="Massicotte C."/>
            <person name="Laframboise R."/>
            <person name="Maranda B."/>
            <person name="Labuda D."/>
            <person name="Decarie J.C."/>
            <person name="Rypens F."/>
            <person name="Goldsher D."/>
            <person name="Fallet-Bianco C."/>
            <person name="Soucy J.F."/>
            <person name="Laberge A.M."/>
            <person name="Maftei C."/>
            <person name="Boycott K."/>
            <person name="Brais B."/>
            <person name="Boucher R.M."/>
            <person name="Rouleau G.A."/>
            <person name="Katsanis N."/>
            <person name="Majewski J."/>
            <person name="Elpeleg O."/>
            <person name="Kukolich M.K."/>
            <person name="Shalev S."/>
            <person name="Michaud J.L."/>
        </authorList>
    </citation>
    <scope>VARIANTS PHE-64 AND TRP-630</scope>
</reference>
<name>FA83G_HUMAN</name>
<evidence type="ECO:0000256" key="1">
    <source>
        <dbReference type="SAM" id="MobiDB-lite"/>
    </source>
</evidence>
<evidence type="ECO:0000269" key="2">
    <source>
    </source>
</evidence>
<evidence type="ECO:0000269" key="3">
    <source>
    </source>
</evidence>
<evidence type="ECO:0000269" key="4">
    <source>
    </source>
</evidence>
<evidence type="ECO:0000303" key="5">
    <source>
    </source>
</evidence>
<evidence type="ECO:0000303" key="6">
    <source>
    </source>
</evidence>
<evidence type="ECO:0000305" key="7"/>
<evidence type="ECO:0000305" key="8">
    <source>
    </source>
</evidence>
<evidence type="ECO:0007744" key="9">
    <source>
    </source>
</evidence>
<evidence type="ECO:0007744" key="10">
    <source>
    </source>
</evidence>
<evidence type="ECO:0007744" key="11">
    <source>
    </source>
</evidence>
<evidence type="ECO:0007744" key="12">
    <source>
    </source>
</evidence>
<evidence type="ECO:0007744" key="13">
    <source>
    </source>
</evidence>
<evidence type="ECO:0007744" key="14">
    <source>
    </source>
</evidence>
<organism>
    <name type="scientific">Homo sapiens</name>
    <name type="common">Human</name>
    <dbReference type="NCBI Taxonomy" id="9606"/>
    <lineage>
        <taxon>Eukaryota</taxon>
        <taxon>Metazoa</taxon>
        <taxon>Chordata</taxon>
        <taxon>Craniata</taxon>
        <taxon>Vertebrata</taxon>
        <taxon>Euteleostomi</taxon>
        <taxon>Mammalia</taxon>
        <taxon>Eutheria</taxon>
        <taxon>Euarchontoglires</taxon>
        <taxon>Primates</taxon>
        <taxon>Haplorrhini</taxon>
        <taxon>Catarrhini</taxon>
        <taxon>Hominidae</taxon>
        <taxon>Homo</taxon>
    </lineage>
</organism>
<sequence length="823" mass="90835">MAFSQVQCLDDNHVNWRSSESKPEFFYSEEQRLALEALVARGRDAFYEVLKRENIRDFLSELELKRILETIEVYDPGSEDPRGTGPSQGPEDNGVGDGEEASGADGVPIEAEPLPSLEYWPQKSDRSIPQLDLGWPDTIAYRGVTRASVYMQPPIDGQAHIKEVVRKMISQAQKVIAVVMDMFTDVDIFKDLLDAGFKRKVAVYIIVDESNVKYFLHMCERACMHLGHLKNLRVRSSGGTEFFTRSATKFKGALAQKFMFVDGDRAVCGSYSFTWSAARTDRNVISVLSGQVVEMFDRQFQELYLMSHSVSLKGIPMEKEPEPEPIVLPSVVPLVPAGTVAKKLVNPKYALVKAKSVDEIAKISSEKQEAKKPLGLKGPALAEHPGELPELLPPIHPGLLHLERANMFEYLPTWVEPDPEPGSDILGYINIIDPNIWNPQPSQMNRIKIRDTSQASAQHQLWKQSQDSRPRPEPCPPPEPSAPQDGVPAENGLPQGDPEPLPPVPKPRTVPVADVLARDSSDIGWVLELPKEEAPQNGTDHRLPRMAGPGHAPLQRQLSVTQDDPESLGVGLPNGLDGVEEEDDDDYVTLSDQDSHSGSSGRGPGPRRPSVASSVSEEYFEVREHSVPLRRRHSEQVANGPTPPPRRQLSAPHITRGTFVGPQGGSPWAQSRGREEADALKRMQAQRSTDKEAQGQQFHHHRVPASGTRDKDGFPGPPRYRSAADSVQSSTRNAGPAMAGPHHWQAKGGQVPRLLPDPGSPRLAQNARPMTDGRATEEHPSPFGIPYSKLSQSKHLKARTGGSQWASSDSKRRAQAPRDRKDP</sequence>
<dbReference type="EMBL" id="AK123558">
    <property type="protein sequence ID" value="BAC85645.1"/>
    <property type="molecule type" value="mRNA"/>
</dbReference>
<dbReference type="EMBL" id="AC090286">
    <property type="status" value="NOT_ANNOTATED_CDS"/>
    <property type="molecule type" value="Genomic_DNA"/>
</dbReference>
<dbReference type="EMBL" id="BC105988">
    <property type="protein sequence ID" value="AAI05989.1"/>
    <property type="molecule type" value="mRNA"/>
</dbReference>
<dbReference type="CCDS" id="CCDS42276.1">
    <molecule id="A6ND36-1"/>
</dbReference>
<dbReference type="RefSeq" id="NP_001035088.2">
    <molecule id="A6ND36-1"/>
    <property type="nucleotide sequence ID" value="NM_001039999.3"/>
</dbReference>
<dbReference type="RefSeq" id="XP_016880442.1">
    <molecule id="A6ND36-1"/>
    <property type="nucleotide sequence ID" value="XM_017024953.3"/>
</dbReference>
<dbReference type="SMR" id="A6ND36"/>
<dbReference type="BioGRID" id="569917">
    <property type="interactions" value="27"/>
</dbReference>
<dbReference type="FunCoup" id="A6ND36">
    <property type="interactions" value="1474"/>
</dbReference>
<dbReference type="IntAct" id="A6ND36">
    <property type="interactions" value="17"/>
</dbReference>
<dbReference type="STRING" id="9606.ENSP00000373647"/>
<dbReference type="GlyGen" id="A6ND36">
    <property type="glycosylation" value="2 sites"/>
</dbReference>
<dbReference type="iPTMnet" id="A6ND36"/>
<dbReference type="PhosphoSitePlus" id="A6ND36"/>
<dbReference type="BioMuta" id="FAM83G"/>
<dbReference type="jPOST" id="A6ND36"/>
<dbReference type="MassIVE" id="A6ND36"/>
<dbReference type="PaxDb" id="9606-ENSP00000373647"/>
<dbReference type="PeptideAtlas" id="A6ND36"/>
<dbReference type="ProteomicsDB" id="879">
    <molecule id="A6ND36-1"/>
</dbReference>
<dbReference type="ProteomicsDB" id="880">
    <molecule id="A6ND36-2"/>
</dbReference>
<dbReference type="Pumba" id="A6ND36"/>
<dbReference type="Antibodypedia" id="6816">
    <property type="antibodies" value="92 antibodies from 18 providers"/>
</dbReference>
<dbReference type="DNASU" id="644815"/>
<dbReference type="Ensembl" id="ENST00000388995.11">
    <molecule id="A6ND36-1"/>
    <property type="protein sequence ID" value="ENSP00000373647.5"/>
    <property type="gene ID" value="ENSG00000188522.16"/>
</dbReference>
<dbReference type="GeneID" id="644815"/>
<dbReference type="KEGG" id="hsa:644815"/>
<dbReference type="MANE-Select" id="ENST00000388995.11">
    <property type="protein sequence ID" value="ENSP00000373647.5"/>
    <property type="RefSeq nucleotide sequence ID" value="NM_001039999.3"/>
    <property type="RefSeq protein sequence ID" value="NP_001035088.2"/>
</dbReference>
<dbReference type="UCSC" id="uc002guw.4">
    <molecule id="A6ND36-1"/>
    <property type="organism name" value="human"/>
</dbReference>
<dbReference type="AGR" id="HGNC:32554"/>
<dbReference type="CTD" id="644815"/>
<dbReference type="DisGeNET" id="644815"/>
<dbReference type="GeneCards" id="FAM83G"/>
<dbReference type="HGNC" id="HGNC:32554">
    <property type="gene designation" value="FAM83G"/>
</dbReference>
<dbReference type="HPA" id="ENSG00000188522">
    <property type="expression patterns" value="Tissue enhanced (esophagus, skin)"/>
</dbReference>
<dbReference type="MIM" id="615886">
    <property type="type" value="gene"/>
</dbReference>
<dbReference type="neXtProt" id="NX_A6ND36"/>
<dbReference type="OpenTargets" id="ENSG00000188522"/>
<dbReference type="PharmGKB" id="PA144596433"/>
<dbReference type="VEuPathDB" id="HostDB:ENSG00000188522"/>
<dbReference type="eggNOG" id="ENOG502QS42">
    <property type="taxonomic scope" value="Eukaryota"/>
</dbReference>
<dbReference type="GeneTree" id="ENSGT00940000157932"/>
<dbReference type="HOGENOM" id="CLU_019056_1_0_1"/>
<dbReference type="InParanoid" id="A6ND36"/>
<dbReference type="OMA" id="PYWQSKA"/>
<dbReference type="OrthoDB" id="6103632at2759"/>
<dbReference type="PAN-GO" id="A6ND36">
    <property type="GO annotations" value="4 GO annotations based on evolutionary models"/>
</dbReference>
<dbReference type="PhylomeDB" id="A6ND36"/>
<dbReference type="TreeFam" id="TF330777"/>
<dbReference type="PathwayCommons" id="A6ND36"/>
<dbReference type="SignaLink" id="A6ND36"/>
<dbReference type="SIGNOR" id="A6ND36"/>
<dbReference type="BioGRID-ORCS" id="644815">
    <property type="hits" value="11 hits in 1160 CRISPR screens"/>
</dbReference>
<dbReference type="ChiTaRS" id="FAM83G">
    <property type="organism name" value="human"/>
</dbReference>
<dbReference type="GenomeRNAi" id="644815"/>
<dbReference type="Pharos" id="A6ND36">
    <property type="development level" value="Tbio"/>
</dbReference>
<dbReference type="PRO" id="PR:A6ND36"/>
<dbReference type="Proteomes" id="UP000005640">
    <property type="component" value="Chromosome 17"/>
</dbReference>
<dbReference type="RNAct" id="A6ND36">
    <property type="molecule type" value="protein"/>
</dbReference>
<dbReference type="Bgee" id="ENSG00000188522">
    <property type="expression patterns" value="Expressed in upper arm skin and 137 other cell types or tissues"/>
</dbReference>
<dbReference type="ExpressionAtlas" id="A6ND36">
    <property type="expression patterns" value="baseline and differential"/>
</dbReference>
<dbReference type="GO" id="GO:0005829">
    <property type="term" value="C:cytosol"/>
    <property type="evidence" value="ECO:0000314"/>
    <property type="project" value="HPA"/>
</dbReference>
<dbReference type="GO" id="GO:0005634">
    <property type="term" value="C:nucleus"/>
    <property type="evidence" value="ECO:0000314"/>
    <property type="project" value="UniProtKB"/>
</dbReference>
<dbReference type="GO" id="GO:0019901">
    <property type="term" value="F:protein kinase binding"/>
    <property type="evidence" value="ECO:0000318"/>
    <property type="project" value="GO_Central"/>
</dbReference>
<dbReference type="GO" id="GO:0030509">
    <property type="term" value="P:BMP signaling pathway"/>
    <property type="evidence" value="ECO:0000314"/>
    <property type="project" value="UniProtKB"/>
</dbReference>
<dbReference type="CDD" id="cd09187">
    <property type="entry name" value="PLDc_FAM83G_N"/>
    <property type="match status" value="1"/>
</dbReference>
<dbReference type="FunFam" id="3.30.870.10:FF:000004">
    <property type="entry name" value="protein FAM83H isoform X2"/>
    <property type="match status" value="1"/>
</dbReference>
<dbReference type="Gene3D" id="3.30.870.10">
    <property type="entry name" value="Endonuclease Chain A"/>
    <property type="match status" value="1"/>
</dbReference>
<dbReference type="InterPro" id="IPR050944">
    <property type="entry name" value="FAM83"/>
</dbReference>
<dbReference type="InterPro" id="IPR012461">
    <property type="entry name" value="SACK1"/>
</dbReference>
<dbReference type="PANTHER" id="PTHR16181">
    <property type="entry name" value="PROTEIN FAM83A-RELATED"/>
    <property type="match status" value="1"/>
</dbReference>
<dbReference type="PANTHER" id="PTHR16181:SF29">
    <property type="entry name" value="PROTEIN FAM83A-RELATED"/>
    <property type="match status" value="1"/>
</dbReference>
<dbReference type="Pfam" id="PF07894">
    <property type="entry name" value="SACK1"/>
    <property type="match status" value="1"/>
</dbReference>
<dbReference type="SUPFAM" id="SSF56024">
    <property type="entry name" value="Phospholipase D/nuclease"/>
    <property type="match status" value="1"/>
</dbReference>
<accession>A6ND36</accession>
<accession>Q3KQZ4</accession>
<accession>Q6ZW60</accession>
<proteinExistence type="evidence at protein level"/>